<gene>
    <name type="primary">ndhG</name>
</gene>
<evidence type="ECO:0000250" key="1"/>
<evidence type="ECO:0000255" key="2"/>
<evidence type="ECO:0000305" key="3"/>
<geneLocation type="chloroplast"/>
<proteinExistence type="inferred from homology"/>
<accession>Q06FQ1</accession>
<dbReference type="EC" id="7.1.1.-"/>
<dbReference type="EMBL" id="DQ897681">
    <property type="protein sequence ID" value="ABI17321.1"/>
    <property type="molecule type" value="Genomic_DNA"/>
</dbReference>
<dbReference type="RefSeq" id="YP_784130.1">
    <property type="nucleotide sequence ID" value="NC_008454.1"/>
</dbReference>
<dbReference type="SMR" id="Q06FQ1"/>
<dbReference type="GeneID" id="4362883"/>
<dbReference type="GO" id="GO:0009535">
    <property type="term" value="C:chloroplast thylakoid membrane"/>
    <property type="evidence" value="ECO:0007669"/>
    <property type="project" value="UniProtKB-SubCell"/>
</dbReference>
<dbReference type="GO" id="GO:0008137">
    <property type="term" value="F:NADH dehydrogenase (ubiquinone) activity"/>
    <property type="evidence" value="ECO:0007669"/>
    <property type="project" value="InterPro"/>
</dbReference>
<dbReference type="GO" id="GO:0048038">
    <property type="term" value="F:quinone binding"/>
    <property type="evidence" value="ECO:0007669"/>
    <property type="project" value="UniProtKB-KW"/>
</dbReference>
<dbReference type="FunFam" id="1.20.120.1200:FF:000002">
    <property type="entry name" value="NAD(P)H-quinone oxidoreductase subunit 6, chloroplastic"/>
    <property type="match status" value="1"/>
</dbReference>
<dbReference type="Gene3D" id="1.20.120.1200">
    <property type="entry name" value="NADH-ubiquinone/plastoquinone oxidoreductase chain 6, subunit NuoJ"/>
    <property type="match status" value="1"/>
</dbReference>
<dbReference type="InterPro" id="IPR050290">
    <property type="entry name" value="NAD(P)H-Q_Oxidoreduct_6"/>
</dbReference>
<dbReference type="InterPro" id="IPR001457">
    <property type="entry name" value="NADH_UbQ/plastoQ_OxRdtase_su6"/>
</dbReference>
<dbReference type="InterPro" id="IPR042106">
    <property type="entry name" value="Nuo/plastoQ_OxRdtase_6_NuoJ"/>
</dbReference>
<dbReference type="PANTHER" id="PTHR48479">
    <property type="entry name" value="NAD(P)H-QUINONE OXIDOREDUCTASE SUBUNIT 6, CHLOROPLASTIC"/>
    <property type="match status" value="1"/>
</dbReference>
<dbReference type="PANTHER" id="PTHR48479:SF1">
    <property type="entry name" value="NAD(P)H-QUINONE OXIDOREDUCTASE SUBUNIT 6, CHLOROPLASTIC"/>
    <property type="match status" value="1"/>
</dbReference>
<dbReference type="Pfam" id="PF00499">
    <property type="entry name" value="Oxidored_q3"/>
    <property type="match status" value="1"/>
</dbReference>
<protein>
    <recommendedName>
        <fullName>NAD(P)H-quinone oxidoreductase subunit 6, chloroplastic</fullName>
        <ecNumber>7.1.1.-</ecNumber>
    </recommendedName>
    <alternativeName>
        <fullName>NAD(P)H dehydrogenase subunit 6</fullName>
    </alternativeName>
    <alternativeName>
        <fullName>NADH-plastoquinone oxidoreductase subunit 6</fullName>
    </alternativeName>
</protein>
<name>NU6C_PELHO</name>
<keyword id="KW-0150">Chloroplast</keyword>
<keyword id="KW-0472">Membrane</keyword>
<keyword id="KW-0520">NAD</keyword>
<keyword id="KW-0521">NADP</keyword>
<keyword id="KW-0934">Plastid</keyword>
<keyword id="KW-0618">Plastoquinone</keyword>
<keyword id="KW-0874">Quinone</keyword>
<keyword id="KW-0793">Thylakoid</keyword>
<keyword id="KW-1278">Translocase</keyword>
<keyword id="KW-0812">Transmembrane</keyword>
<keyword id="KW-1133">Transmembrane helix</keyword>
<keyword id="KW-0813">Transport</keyword>
<comment type="function">
    <text evidence="1">NDH shuttles electrons from NAD(P)H:plastoquinone, via FMN and iron-sulfur (Fe-S) centers, to quinones in the photosynthetic chain and possibly in a chloroplast respiratory chain. The immediate electron acceptor for the enzyme in this species is believed to be plastoquinone. Couples the redox reaction to proton translocation, and thus conserves the redox energy in a proton gradient (By similarity).</text>
</comment>
<comment type="catalytic activity">
    <reaction>
        <text>a plastoquinone + NADH + (n+1) H(+)(in) = a plastoquinol + NAD(+) + n H(+)(out)</text>
        <dbReference type="Rhea" id="RHEA:42608"/>
        <dbReference type="Rhea" id="RHEA-COMP:9561"/>
        <dbReference type="Rhea" id="RHEA-COMP:9562"/>
        <dbReference type="ChEBI" id="CHEBI:15378"/>
        <dbReference type="ChEBI" id="CHEBI:17757"/>
        <dbReference type="ChEBI" id="CHEBI:57540"/>
        <dbReference type="ChEBI" id="CHEBI:57945"/>
        <dbReference type="ChEBI" id="CHEBI:62192"/>
    </reaction>
</comment>
<comment type="catalytic activity">
    <reaction>
        <text>a plastoquinone + NADPH + (n+1) H(+)(in) = a plastoquinol + NADP(+) + n H(+)(out)</text>
        <dbReference type="Rhea" id="RHEA:42612"/>
        <dbReference type="Rhea" id="RHEA-COMP:9561"/>
        <dbReference type="Rhea" id="RHEA-COMP:9562"/>
        <dbReference type="ChEBI" id="CHEBI:15378"/>
        <dbReference type="ChEBI" id="CHEBI:17757"/>
        <dbReference type="ChEBI" id="CHEBI:57783"/>
        <dbReference type="ChEBI" id="CHEBI:58349"/>
        <dbReference type="ChEBI" id="CHEBI:62192"/>
    </reaction>
</comment>
<comment type="subunit">
    <text evidence="1">NDH is composed of at least 16 different subunits, 5 of which are encoded in the nucleus.</text>
</comment>
<comment type="subcellular location">
    <subcellularLocation>
        <location evidence="1">Plastid</location>
        <location evidence="1">Chloroplast thylakoid membrane</location>
        <topology evidence="1">Multi-pass membrane protein</topology>
    </subcellularLocation>
</comment>
<comment type="similarity">
    <text evidence="3">Belongs to the complex I subunit 6 family.</text>
</comment>
<sequence length="176" mass="19393">MDLPGPIHDFLLVFLGSGIILGGLGVVLLTNPIYSAFSLGFVFICISLFYILSNSYFVAAAQLLIYVGAINVLILFAVMFMNGSEYYKDFHLWTLGDGLTSLICTILFLSLITTILDTSWYGILWTTKSNQIIEKDFISNSQQLGILLSTDFFLPFELMSIILLVALLGAIAAARQ</sequence>
<organism>
    <name type="scientific">Pelargonium hortorum</name>
    <name type="common">Common geranium</name>
    <name type="synonym">Pelargonium inquinans x Pelargonium zonale</name>
    <dbReference type="NCBI Taxonomy" id="4031"/>
    <lineage>
        <taxon>Eukaryota</taxon>
        <taxon>Viridiplantae</taxon>
        <taxon>Streptophyta</taxon>
        <taxon>Embryophyta</taxon>
        <taxon>Tracheophyta</taxon>
        <taxon>Spermatophyta</taxon>
        <taxon>Magnoliopsida</taxon>
        <taxon>eudicotyledons</taxon>
        <taxon>Gunneridae</taxon>
        <taxon>Pentapetalae</taxon>
        <taxon>rosids</taxon>
        <taxon>malvids</taxon>
        <taxon>Geraniales</taxon>
        <taxon>Geraniaceae</taxon>
        <taxon>Pelargonium</taxon>
    </lineage>
</organism>
<reference key="1">
    <citation type="journal article" date="2006" name="Mol. Biol. Evol.">
        <title>The complete chloroplast genome sequence of Pelargonium x hortorum: organization and evolution of the largest and most highly rearranged chloroplast genome of land plants.</title>
        <authorList>
            <person name="Chumley T.W."/>
            <person name="Palmer J.D."/>
            <person name="Mower J.P."/>
            <person name="Fourcade H.M."/>
            <person name="Calie P.J."/>
            <person name="Boore J.L."/>
            <person name="Jansen R.K."/>
        </authorList>
    </citation>
    <scope>NUCLEOTIDE SEQUENCE [LARGE SCALE GENOMIC DNA]</scope>
    <source>
        <strain>cv. Ringo White</strain>
    </source>
</reference>
<feature type="chain" id="PRO_0000360282" description="NAD(P)H-quinone oxidoreductase subunit 6, chloroplastic">
    <location>
        <begin position="1"/>
        <end position="176"/>
    </location>
</feature>
<feature type="transmembrane region" description="Helical" evidence="2">
    <location>
        <begin position="10"/>
        <end position="30"/>
    </location>
</feature>
<feature type="transmembrane region" description="Helical" evidence="2">
    <location>
        <begin position="32"/>
        <end position="52"/>
    </location>
</feature>
<feature type="transmembrane region" description="Helical" evidence="2">
    <location>
        <begin position="61"/>
        <end position="81"/>
    </location>
</feature>
<feature type="transmembrane region" description="Helical" evidence="2">
    <location>
        <begin position="92"/>
        <end position="112"/>
    </location>
</feature>
<feature type="transmembrane region" description="Helical" evidence="2">
    <location>
        <begin position="152"/>
        <end position="172"/>
    </location>
</feature>